<organism>
    <name type="scientific">Rhodopseudomonas palustris (strain BisB5)</name>
    <dbReference type="NCBI Taxonomy" id="316057"/>
    <lineage>
        <taxon>Bacteria</taxon>
        <taxon>Pseudomonadati</taxon>
        <taxon>Pseudomonadota</taxon>
        <taxon>Alphaproteobacteria</taxon>
        <taxon>Hyphomicrobiales</taxon>
        <taxon>Nitrobacteraceae</taxon>
        <taxon>Rhodopseudomonas</taxon>
    </lineage>
</organism>
<name>LIPA_RHOPS</name>
<gene>
    <name evidence="1" type="primary">lipA</name>
    <name type="ordered locus">RPD_2584</name>
</gene>
<feature type="chain" id="PRO_1000012264" description="Lipoyl synthase">
    <location>
        <begin position="1"/>
        <end position="319"/>
    </location>
</feature>
<feature type="domain" description="Radical SAM core" evidence="2">
    <location>
        <begin position="73"/>
        <end position="289"/>
    </location>
</feature>
<feature type="region of interest" description="Disordered" evidence="3">
    <location>
        <begin position="1"/>
        <end position="32"/>
    </location>
</feature>
<feature type="compositionally biased region" description="Basic and acidic residues" evidence="3">
    <location>
        <begin position="16"/>
        <end position="32"/>
    </location>
</feature>
<feature type="binding site" evidence="1">
    <location>
        <position position="61"/>
    </location>
    <ligand>
        <name>[4Fe-4S] cluster</name>
        <dbReference type="ChEBI" id="CHEBI:49883"/>
        <label>1</label>
    </ligand>
</feature>
<feature type="binding site" evidence="1">
    <location>
        <position position="66"/>
    </location>
    <ligand>
        <name>[4Fe-4S] cluster</name>
        <dbReference type="ChEBI" id="CHEBI:49883"/>
        <label>1</label>
    </ligand>
</feature>
<feature type="binding site" evidence="1">
    <location>
        <position position="72"/>
    </location>
    <ligand>
        <name>[4Fe-4S] cluster</name>
        <dbReference type="ChEBI" id="CHEBI:49883"/>
        <label>1</label>
    </ligand>
</feature>
<feature type="binding site" evidence="1">
    <location>
        <position position="87"/>
    </location>
    <ligand>
        <name>[4Fe-4S] cluster</name>
        <dbReference type="ChEBI" id="CHEBI:49883"/>
        <label>2</label>
        <note>4Fe-4S-S-AdoMet</note>
    </ligand>
</feature>
<feature type="binding site" evidence="1">
    <location>
        <position position="91"/>
    </location>
    <ligand>
        <name>[4Fe-4S] cluster</name>
        <dbReference type="ChEBI" id="CHEBI:49883"/>
        <label>2</label>
        <note>4Fe-4S-S-AdoMet</note>
    </ligand>
</feature>
<feature type="binding site" evidence="1">
    <location>
        <position position="94"/>
    </location>
    <ligand>
        <name>[4Fe-4S] cluster</name>
        <dbReference type="ChEBI" id="CHEBI:49883"/>
        <label>2</label>
        <note>4Fe-4S-S-AdoMet</note>
    </ligand>
</feature>
<feature type="binding site" evidence="1">
    <location>
        <position position="300"/>
    </location>
    <ligand>
        <name>[4Fe-4S] cluster</name>
        <dbReference type="ChEBI" id="CHEBI:49883"/>
        <label>1</label>
    </ligand>
</feature>
<accession>Q137C6</accession>
<keyword id="KW-0004">4Fe-4S</keyword>
<keyword id="KW-0963">Cytoplasm</keyword>
<keyword id="KW-0408">Iron</keyword>
<keyword id="KW-0411">Iron-sulfur</keyword>
<keyword id="KW-0479">Metal-binding</keyword>
<keyword id="KW-0949">S-adenosyl-L-methionine</keyword>
<keyword id="KW-0808">Transferase</keyword>
<proteinExistence type="inferred from homology"/>
<protein>
    <recommendedName>
        <fullName evidence="1">Lipoyl synthase</fullName>
        <ecNumber evidence="1">2.8.1.8</ecNumber>
    </recommendedName>
    <alternativeName>
        <fullName evidence="1">Lip-syn</fullName>
        <shortName evidence="1">LS</shortName>
    </alternativeName>
    <alternativeName>
        <fullName evidence="1">Lipoate synthase</fullName>
    </alternativeName>
    <alternativeName>
        <fullName evidence="1">Lipoic acid synthase</fullName>
    </alternativeName>
    <alternativeName>
        <fullName evidence="1">Sulfur insertion protein LipA</fullName>
    </alternativeName>
</protein>
<dbReference type="EC" id="2.8.1.8" evidence="1"/>
<dbReference type="EMBL" id="CP000283">
    <property type="protein sequence ID" value="ABE39813.1"/>
    <property type="molecule type" value="Genomic_DNA"/>
</dbReference>
<dbReference type="SMR" id="Q137C6"/>
<dbReference type="STRING" id="316057.RPD_2584"/>
<dbReference type="KEGG" id="rpd:RPD_2584"/>
<dbReference type="eggNOG" id="COG0320">
    <property type="taxonomic scope" value="Bacteria"/>
</dbReference>
<dbReference type="HOGENOM" id="CLU_033144_2_1_5"/>
<dbReference type="BioCyc" id="RPAL316057:RPD_RS12995-MONOMER"/>
<dbReference type="UniPathway" id="UPA00538">
    <property type="reaction ID" value="UER00593"/>
</dbReference>
<dbReference type="Proteomes" id="UP000001818">
    <property type="component" value="Chromosome"/>
</dbReference>
<dbReference type="GO" id="GO:0005737">
    <property type="term" value="C:cytoplasm"/>
    <property type="evidence" value="ECO:0007669"/>
    <property type="project" value="UniProtKB-SubCell"/>
</dbReference>
<dbReference type="GO" id="GO:0051539">
    <property type="term" value="F:4 iron, 4 sulfur cluster binding"/>
    <property type="evidence" value="ECO:0007669"/>
    <property type="project" value="UniProtKB-UniRule"/>
</dbReference>
<dbReference type="GO" id="GO:0016992">
    <property type="term" value="F:lipoate synthase activity"/>
    <property type="evidence" value="ECO:0007669"/>
    <property type="project" value="UniProtKB-UniRule"/>
</dbReference>
<dbReference type="GO" id="GO:0046872">
    <property type="term" value="F:metal ion binding"/>
    <property type="evidence" value="ECO:0007669"/>
    <property type="project" value="UniProtKB-KW"/>
</dbReference>
<dbReference type="CDD" id="cd01335">
    <property type="entry name" value="Radical_SAM"/>
    <property type="match status" value="1"/>
</dbReference>
<dbReference type="FunFam" id="3.20.20.70:FF:000186">
    <property type="entry name" value="Lipoyl synthase"/>
    <property type="match status" value="1"/>
</dbReference>
<dbReference type="Gene3D" id="3.20.20.70">
    <property type="entry name" value="Aldolase class I"/>
    <property type="match status" value="1"/>
</dbReference>
<dbReference type="HAMAP" id="MF_00206">
    <property type="entry name" value="Lipoyl_synth"/>
    <property type="match status" value="1"/>
</dbReference>
<dbReference type="InterPro" id="IPR013785">
    <property type="entry name" value="Aldolase_TIM"/>
</dbReference>
<dbReference type="InterPro" id="IPR006638">
    <property type="entry name" value="Elp3/MiaA/NifB-like_rSAM"/>
</dbReference>
<dbReference type="InterPro" id="IPR003698">
    <property type="entry name" value="Lipoyl_synth"/>
</dbReference>
<dbReference type="InterPro" id="IPR007197">
    <property type="entry name" value="rSAM"/>
</dbReference>
<dbReference type="NCBIfam" id="TIGR00510">
    <property type="entry name" value="lipA"/>
    <property type="match status" value="1"/>
</dbReference>
<dbReference type="NCBIfam" id="NF004019">
    <property type="entry name" value="PRK05481.1"/>
    <property type="match status" value="1"/>
</dbReference>
<dbReference type="NCBIfam" id="NF009544">
    <property type="entry name" value="PRK12928.1"/>
    <property type="match status" value="1"/>
</dbReference>
<dbReference type="PANTHER" id="PTHR10949">
    <property type="entry name" value="LIPOYL SYNTHASE"/>
    <property type="match status" value="1"/>
</dbReference>
<dbReference type="PANTHER" id="PTHR10949:SF0">
    <property type="entry name" value="LIPOYL SYNTHASE, MITOCHONDRIAL"/>
    <property type="match status" value="1"/>
</dbReference>
<dbReference type="Pfam" id="PF04055">
    <property type="entry name" value="Radical_SAM"/>
    <property type="match status" value="1"/>
</dbReference>
<dbReference type="PIRSF" id="PIRSF005963">
    <property type="entry name" value="Lipoyl_synth"/>
    <property type="match status" value="1"/>
</dbReference>
<dbReference type="SFLD" id="SFLDF00271">
    <property type="entry name" value="lipoyl_synthase"/>
    <property type="match status" value="1"/>
</dbReference>
<dbReference type="SFLD" id="SFLDG01058">
    <property type="entry name" value="lipoyl_synthase_like"/>
    <property type="match status" value="1"/>
</dbReference>
<dbReference type="SMART" id="SM00729">
    <property type="entry name" value="Elp3"/>
    <property type="match status" value="1"/>
</dbReference>
<dbReference type="SUPFAM" id="SSF102114">
    <property type="entry name" value="Radical SAM enzymes"/>
    <property type="match status" value="1"/>
</dbReference>
<dbReference type="PROSITE" id="PS51918">
    <property type="entry name" value="RADICAL_SAM"/>
    <property type="match status" value="1"/>
</dbReference>
<evidence type="ECO:0000255" key="1">
    <source>
        <dbReference type="HAMAP-Rule" id="MF_00206"/>
    </source>
</evidence>
<evidence type="ECO:0000255" key="2">
    <source>
        <dbReference type="PROSITE-ProRule" id="PRU01266"/>
    </source>
</evidence>
<evidence type="ECO:0000256" key="3">
    <source>
        <dbReference type="SAM" id="MobiDB-lite"/>
    </source>
</evidence>
<reference key="1">
    <citation type="submission" date="2006-03" db="EMBL/GenBank/DDBJ databases">
        <title>Complete sequence of Rhodopseudomonas palustris BisB5.</title>
        <authorList>
            <consortium name="US DOE Joint Genome Institute"/>
            <person name="Copeland A."/>
            <person name="Lucas S."/>
            <person name="Lapidus A."/>
            <person name="Barry K."/>
            <person name="Detter J.C."/>
            <person name="Glavina del Rio T."/>
            <person name="Hammon N."/>
            <person name="Israni S."/>
            <person name="Dalin E."/>
            <person name="Tice H."/>
            <person name="Pitluck S."/>
            <person name="Chain P."/>
            <person name="Malfatti S."/>
            <person name="Shin M."/>
            <person name="Vergez L."/>
            <person name="Schmutz J."/>
            <person name="Larimer F."/>
            <person name="Land M."/>
            <person name="Hauser L."/>
            <person name="Pelletier D.A."/>
            <person name="Kyrpides N."/>
            <person name="Lykidis A."/>
            <person name="Oda Y."/>
            <person name="Harwood C.S."/>
            <person name="Richardson P."/>
        </authorList>
    </citation>
    <scope>NUCLEOTIDE SEQUENCE [LARGE SCALE GENOMIC DNA]</scope>
    <source>
        <strain>BisB5</strain>
    </source>
</reference>
<sequence length="319" mass="35137">MVVLVDTVSSTPVRPRHPEKAARPDSLSPKKPDWIRVRAPTTRGYGETRSIVKENGLVTVCEEAGCPNIGECWDKKHATFMIMGDTCTRACAFCNVKTGLPGALDPNEPAYVAEATRKLGLEHLVITSVDRDDLADGGAAHFAATIRAVREHCPTTTIEILTPDFLRKDGALDVVVAAKPDVFNHNLETVPSRYLSVRPGARYFHSIRLLQRVKELDPTIFTKSGIMVGLGEERHEVLQVMDDLRSAEVDFLTIGQYLQPTRKHHAVMRYVTPDEFGGYGKTAYAKGFLMVSASPMTRSSHHAGDDFAKLRAARAALSR</sequence>
<comment type="function">
    <text evidence="1">Catalyzes the radical-mediated insertion of two sulfur atoms into the C-6 and C-8 positions of the octanoyl moiety bound to the lipoyl domains of lipoate-dependent enzymes, thereby converting the octanoylated domains into lipoylated derivatives.</text>
</comment>
<comment type="catalytic activity">
    <reaction evidence="1">
        <text>[[Fe-S] cluster scaffold protein carrying a second [4Fe-4S](2+) cluster] + N(6)-octanoyl-L-lysyl-[protein] + 2 oxidized [2Fe-2S]-[ferredoxin] + 2 S-adenosyl-L-methionine + 4 H(+) = [[Fe-S] cluster scaffold protein] + N(6)-[(R)-dihydrolipoyl]-L-lysyl-[protein] + 4 Fe(3+) + 2 hydrogen sulfide + 2 5'-deoxyadenosine + 2 L-methionine + 2 reduced [2Fe-2S]-[ferredoxin]</text>
        <dbReference type="Rhea" id="RHEA:16585"/>
        <dbReference type="Rhea" id="RHEA-COMP:9928"/>
        <dbReference type="Rhea" id="RHEA-COMP:10000"/>
        <dbReference type="Rhea" id="RHEA-COMP:10001"/>
        <dbReference type="Rhea" id="RHEA-COMP:10475"/>
        <dbReference type="Rhea" id="RHEA-COMP:14568"/>
        <dbReference type="Rhea" id="RHEA-COMP:14569"/>
        <dbReference type="ChEBI" id="CHEBI:15378"/>
        <dbReference type="ChEBI" id="CHEBI:17319"/>
        <dbReference type="ChEBI" id="CHEBI:29034"/>
        <dbReference type="ChEBI" id="CHEBI:29919"/>
        <dbReference type="ChEBI" id="CHEBI:33722"/>
        <dbReference type="ChEBI" id="CHEBI:33737"/>
        <dbReference type="ChEBI" id="CHEBI:33738"/>
        <dbReference type="ChEBI" id="CHEBI:57844"/>
        <dbReference type="ChEBI" id="CHEBI:59789"/>
        <dbReference type="ChEBI" id="CHEBI:78809"/>
        <dbReference type="ChEBI" id="CHEBI:83100"/>
        <dbReference type="EC" id="2.8.1.8"/>
    </reaction>
</comment>
<comment type="cofactor">
    <cofactor evidence="1">
        <name>[4Fe-4S] cluster</name>
        <dbReference type="ChEBI" id="CHEBI:49883"/>
    </cofactor>
    <text evidence="1">Binds 2 [4Fe-4S] clusters per subunit. One cluster is coordinated with 3 cysteines and an exchangeable S-adenosyl-L-methionine.</text>
</comment>
<comment type="pathway">
    <text evidence="1">Protein modification; protein lipoylation via endogenous pathway; protein N(6)-(lipoyl)lysine from octanoyl-[acyl-carrier-protein]: step 2/2.</text>
</comment>
<comment type="subcellular location">
    <subcellularLocation>
        <location evidence="1">Cytoplasm</location>
    </subcellularLocation>
</comment>
<comment type="similarity">
    <text evidence="1">Belongs to the radical SAM superfamily. Lipoyl synthase family.</text>
</comment>